<evidence type="ECO:0000250" key="1">
    <source>
        <dbReference type="UniProtKB" id="P04798"/>
    </source>
</evidence>
<evidence type="ECO:0000255" key="2"/>
<evidence type="ECO:0000255" key="3">
    <source>
        <dbReference type="PROSITE-ProRule" id="PRU00498"/>
    </source>
</evidence>
<evidence type="ECO:0000269" key="4">
    <source>
    </source>
</evidence>
<evidence type="ECO:0000303" key="5">
    <source>
    </source>
</evidence>
<evidence type="ECO:0000305" key="6"/>
<feature type="chain" id="PRO_0000452994" description="Cytochrome P450 monooxygenase opaB">
    <location>
        <begin position="1"/>
        <end position="575"/>
    </location>
</feature>
<feature type="transmembrane region" description="Helical" evidence="2">
    <location>
        <begin position="37"/>
        <end position="57"/>
    </location>
</feature>
<feature type="binding site" description="axial binding residue" evidence="1">
    <location>
        <position position="521"/>
    </location>
    <ligand>
        <name>heme</name>
        <dbReference type="ChEBI" id="CHEBI:30413"/>
    </ligand>
    <ligandPart>
        <name>Fe</name>
        <dbReference type="ChEBI" id="CHEBI:18248"/>
    </ligandPart>
</feature>
<feature type="glycosylation site" description="N-linked (GlcNAc...) asparagine" evidence="3">
    <location>
        <position position="6"/>
    </location>
</feature>
<feature type="glycosylation site" description="N-linked (GlcNAc...) asparagine" evidence="3">
    <location>
        <position position="83"/>
    </location>
</feature>
<feature type="glycosylation site" description="N-linked (GlcNAc...) asparagine" evidence="3">
    <location>
        <position position="242"/>
    </location>
</feature>
<reference key="1">
    <citation type="journal article" date="2015" name="PLoS ONE">
        <title>A genomics based discovery of secondary metabolite biosynthetic gene clusters in Aspergillus ustus.</title>
        <authorList>
            <person name="Pi B."/>
            <person name="Yu D."/>
            <person name="Dai F."/>
            <person name="Song X."/>
            <person name="Zhu C."/>
            <person name="Li H."/>
            <person name="Yu Y."/>
        </authorList>
    </citation>
    <scope>NUCLEOTIDE SEQUENCE [LARGE SCALE GENOMIC DNA]</scope>
    <scope>IDENTIFICATION</scope>
    <source>
        <strain>3.3904</strain>
    </source>
</reference>
<reference key="2">
    <citation type="journal article" date="2020" name="Nat. Commun.">
        <title>Oxepinamide F biosynthesis involves enzymatic D-aminoacyl epimerization, 3H-oxepin formation, and hydroxylation induced double bond migration.</title>
        <authorList>
            <person name="Zheng L."/>
            <person name="Wang H."/>
            <person name="Fan A."/>
            <person name="Li S.M."/>
        </authorList>
    </citation>
    <scope>FUNCTION</scope>
    <scope>DISRUPTION PHENOTYPE</scope>
    <scope>CATALYTIC ACTIVITY</scope>
    <scope>PATHWAY</scope>
</reference>
<organism>
    <name type="scientific">Aspergillus ustus</name>
    <dbReference type="NCBI Taxonomy" id="40382"/>
    <lineage>
        <taxon>Eukaryota</taxon>
        <taxon>Fungi</taxon>
        <taxon>Dikarya</taxon>
        <taxon>Ascomycota</taxon>
        <taxon>Pezizomycotina</taxon>
        <taxon>Eurotiomycetes</taxon>
        <taxon>Eurotiomycetidae</taxon>
        <taxon>Eurotiales</taxon>
        <taxon>Aspergillaceae</taxon>
        <taxon>Aspergillus</taxon>
        <taxon>Aspergillus subgen. Nidulantes</taxon>
    </lineage>
</organism>
<keyword id="KW-0325">Glycoprotein</keyword>
<keyword id="KW-0349">Heme</keyword>
<keyword id="KW-0408">Iron</keyword>
<keyword id="KW-0472">Membrane</keyword>
<keyword id="KW-0479">Metal-binding</keyword>
<keyword id="KW-0503">Monooxygenase</keyword>
<keyword id="KW-0560">Oxidoreductase</keyword>
<keyword id="KW-1185">Reference proteome</keyword>
<keyword id="KW-0812">Transmembrane</keyword>
<keyword id="KW-1133">Transmembrane helix</keyword>
<proteinExistence type="evidence at protein level"/>
<dbReference type="EC" id="1.-.-.-" evidence="4"/>
<dbReference type="EMBL" id="JOMC01000153">
    <property type="protein sequence ID" value="KIA75457.1"/>
    <property type="molecule type" value="Genomic_DNA"/>
</dbReference>
<dbReference type="GlyCosmos" id="A0A0C1E1L9">
    <property type="glycosylation" value="3 sites, No reported glycans"/>
</dbReference>
<dbReference type="Proteomes" id="UP000053475">
    <property type="component" value="Unassembled WGS sequence"/>
</dbReference>
<dbReference type="GO" id="GO:0016020">
    <property type="term" value="C:membrane"/>
    <property type="evidence" value="ECO:0007669"/>
    <property type="project" value="UniProtKB-SubCell"/>
</dbReference>
<dbReference type="GO" id="GO:0020037">
    <property type="term" value="F:heme binding"/>
    <property type="evidence" value="ECO:0007669"/>
    <property type="project" value="InterPro"/>
</dbReference>
<dbReference type="GO" id="GO:0005506">
    <property type="term" value="F:iron ion binding"/>
    <property type="evidence" value="ECO:0007669"/>
    <property type="project" value="InterPro"/>
</dbReference>
<dbReference type="GO" id="GO:0004497">
    <property type="term" value="F:monooxygenase activity"/>
    <property type="evidence" value="ECO:0007669"/>
    <property type="project" value="UniProtKB-KW"/>
</dbReference>
<dbReference type="GO" id="GO:0016705">
    <property type="term" value="F:oxidoreductase activity, acting on paired donors, with incorporation or reduction of molecular oxygen"/>
    <property type="evidence" value="ECO:0007669"/>
    <property type="project" value="InterPro"/>
</dbReference>
<dbReference type="GO" id="GO:0044550">
    <property type="term" value="P:secondary metabolite biosynthetic process"/>
    <property type="evidence" value="ECO:0007669"/>
    <property type="project" value="UniProtKB-ARBA"/>
</dbReference>
<dbReference type="Gene3D" id="1.10.630.10">
    <property type="entry name" value="Cytochrome P450"/>
    <property type="match status" value="1"/>
</dbReference>
<dbReference type="InterPro" id="IPR001128">
    <property type="entry name" value="Cyt_P450"/>
</dbReference>
<dbReference type="InterPro" id="IPR036396">
    <property type="entry name" value="Cyt_P450_sf"/>
</dbReference>
<dbReference type="InterPro" id="IPR050121">
    <property type="entry name" value="Cytochrome_P450_monoxygenase"/>
</dbReference>
<dbReference type="PANTHER" id="PTHR24305">
    <property type="entry name" value="CYTOCHROME P450"/>
    <property type="match status" value="1"/>
</dbReference>
<dbReference type="PANTHER" id="PTHR24305:SF210">
    <property type="entry name" value="CYTOCHROME P450 MONOOXYGENASE ASQL-RELATED"/>
    <property type="match status" value="1"/>
</dbReference>
<dbReference type="Pfam" id="PF00067">
    <property type="entry name" value="p450"/>
    <property type="match status" value="1"/>
</dbReference>
<dbReference type="SUPFAM" id="SSF48264">
    <property type="entry name" value="Cytochrome P450"/>
    <property type="match status" value="1"/>
</dbReference>
<gene>
    <name evidence="5" type="primary">opaB</name>
    <name type="ORF">HK57_00064</name>
</gene>
<protein>
    <recommendedName>
        <fullName evidence="5">Cytochrome P450 monooxygenase opaB</fullName>
        <ecNumber evidence="4">1.-.-.-</ecNumber>
    </recommendedName>
    <alternativeName>
        <fullName evidence="5">Oxepinamide F biosynthesis cluster protein B</fullName>
    </alternativeName>
</protein>
<sequence>MAVAPNVSDLQSGVVKASQMARAALEHTLQHHQLQDFILAAILASIILLIIRNSMLSPLRGIPGPRLAGLTSLYEFYYDVIKNGTYAHQHPKMHQQYDSTIIRISPNHVHIADPELFAIGPAGSRFRKARYYYNSIGMSTAIGSHYDVEAHHRHRSTMAVGFSTKSLQAFDPIIVNYAREIMDIIASRGLKGTPVVLSHHTQAYTIDVVAKISFGQPVGAMHEVGDHPPTVQAMDCFSNHFNFTKHFPYWQLILPFMPTSAVKRIMPGVHYIKEVGTRLITNLIEQRRIEGRLDEEYQEGKGAIFETLLKPNPKKQYPAPDLNGLVEDACAFLVGGSDTTGLTLQAVTLFVLRNPDVLCALRAELDSASEFIRDSFDIHQVSKLPWLTAVIRETMRLLPPTPGPLPREVPPEGIRVGKYFLPGGNANKGPGRQPGDAEFRPLSPAVCSLYITIPASTQTQKGSSRSVGWEKAVRAWWSGGTHSVVDHARVSDASTSCAYFVFSSSIICGREQHTDERFLACRVAWHELLAFLALLFLRFDLELYESDETNLEWTEHMFTRIRAPVQVRIMKDRWA</sequence>
<accession>A0A0C1E1L9</accession>
<name>OPAB_ASPUT</name>
<comment type="function">
    <text evidence="4">Cytochrome P450 monooxygenase; part of the gene cluster that mediates the biosynthesis of oxepinamides, derivatives of anthranilyl-containing tripeptides that share an oxepin ring and a fused pyrimidinone moiety (PubMed:33004788). The nonribosomal peptide synthetase (NRPS) opaA assembles the quinazolinone core with D-Phe incorporation (PubMed:33004788). The first adenylation domain (A1) of opaA loads and activates anthranilic acid whereas the second A domain (A2) is for activating of L-Phe, which is then converted to D-form by the E domain (PubMed:33004788). The third A domain (A3) is responsible for L-Ile activation and the terminal condensation domain C3 for cyclization and releasing the NRPS product protuboxepin K (PubMed:33004788). The cytochrome P450 monooxygenase opaB then catalyzes alone the oxepin ring formation to convert protuboxepin K into protuboxepin A (PubMed:33004788). The flavoenzyme opaC installs subsequently one hydroxyl group at the oxepin ring, accompanied by double bond migration, to form 15-epi-oxepinamide E (PubMed:33004788). The epimerase opaE changes the D-Phe residue back to L-form, leading to oxepinamide E, which is further methylated at the hydroxyl group at C-12 by the O-methyltransferase OpaF to yield oxepinamide F (PubMed:33004788).</text>
</comment>
<comment type="cofactor">
    <cofactor evidence="1">
        <name>heme</name>
        <dbReference type="ChEBI" id="CHEBI:30413"/>
    </cofactor>
</comment>
<comment type="pathway">
    <text evidence="4">Secondary metabolite biosynthesis.</text>
</comment>
<comment type="subcellular location">
    <subcellularLocation>
        <location evidence="2">Membrane</location>
        <topology evidence="2">Single-pass membrane protein</topology>
    </subcellularLocation>
</comment>
<comment type="disruption phenotype">
    <text evidence="4">Abolishes the production of both oxepinamide F and oxepinamide E and leads to the accumulation of protuboxepin K.</text>
</comment>
<comment type="similarity">
    <text evidence="6">Belongs to the cytochrome P450 family.</text>
</comment>